<feature type="chain" id="PRO_0000095321" description="Tyrosine recombinase XerC">
    <location>
        <begin position="1"/>
        <end position="318"/>
    </location>
</feature>
<feature type="domain" description="Core-binding (CB)" evidence="3">
    <location>
        <begin position="17"/>
        <end position="108"/>
    </location>
</feature>
<feature type="domain" description="Tyr recombinase" evidence="2">
    <location>
        <begin position="129"/>
        <end position="312"/>
    </location>
</feature>
<feature type="active site" evidence="1">
    <location>
        <position position="172"/>
    </location>
</feature>
<feature type="active site" evidence="1">
    <location>
        <position position="196"/>
    </location>
</feature>
<feature type="active site" evidence="1">
    <location>
        <position position="264"/>
    </location>
</feature>
<feature type="active site" evidence="1">
    <location>
        <position position="267"/>
    </location>
</feature>
<feature type="active site" evidence="1">
    <location>
        <position position="290"/>
    </location>
</feature>
<feature type="active site" description="O-(3'-phospho-DNA)-tyrosine intermediate" evidence="1">
    <location>
        <position position="299"/>
    </location>
</feature>
<sequence length="318" mass="34466">MKPPGPMMNELLAIGHPEVMAERRRWLASLAEERRLSEKTVDAYERDTRQFLTFLTGHLAGPPRLSDICALRPADLRGFLAQRRKGGAGARTLGRGLAGLRSFLRYLERNGLANAAGAGAVRSPKQPKSLPKALTDREALKVVTADAQLAEEPWIAARNAAVLTLLYGCGLRIAEALDLTPADFSGPVTSLRVTGKGGKTRIVPMIAAAAEAVETYRKLCPYHIEPEEPIFRGARGAKLQPAIIQREMQKLRAALGLPDSATPHALRHSFATHLLAGGGDLRTIQELLGHASLSTTQVYTGVDSARLLEIYDRAHPRA</sequence>
<accession>Q92LK1</accession>
<proteinExistence type="inferred from homology"/>
<keyword id="KW-0131">Cell cycle</keyword>
<keyword id="KW-0132">Cell division</keyword>
<keyword id="KW-0159">Chromosome partition</keyword>
<keyword id="KW-0963">Cytoplasm</keyword>
<keyword id="KW-0229">DNA integration</keyword>
<keyword id="KW-0233">DNA recombination</keyword>
<keyword id="KW-0238">DNA-binding</keyword>
<keyword id="KW-1185">Reference proteome</keyword>
<evidence type="ECO:0000255" key="1">
    <source>
        <dbReference type="HAMAP-Rule" id="MF_01808"/>
    </source>
</evidence>
<evidence type="ECO:0000255" key="2">
    <source>
        <dbReference type="PROSITE-ProRule" id="PRU01246"/>
    </source>
</evidence>
<evidence type="ECO:0000255" key="3">
    <source>
        <dbReference type="PROSITE-ProRule" id="PRU01248"/>
    </source>
</evidence>
<evidence type="ECO:0000305" key="4"/>
<protein>
    <recommendedName>
        <fullName evidence="1">Tyrosine recombinase XerC</fullName>
    </recommendedName>
</protein>
<dbReference type="EMBL" id="AL591688">
    <property type="protein sequence ID" value="CAC47625.1"/>
    <property type="status" value="ALT_INIT"/>
    <property type="molecule type" value="Genomic_DNA"/>
</dbReference>
<dbReference type="RefSeq" id="NP_387152.1">
    <property type="nucleotide sequence ID" value="NC_003047.1"/>
</dbReference>
<dbReference type="SMR" id="Q92LK1"/>
<dbReference type="EnsemblBacteria" id="CAC47625">
    <property type="protein sequence ID" value="CAC47625"/>
    <property type="gene ID" value="SMc02489"/>
</dbReference>
<dbReference type="KEGG" id="sme:SMc02489"/>
<dbReference type="PATRIC" id="fig|266834.11.peg.4580"/>
<dbReference type="eggNOG" id="COG4974">
    <property type="taxonomic scope" value="Bacteria"/>
</dbReference>
<dbReference type="HOGENOM" id="CLU_027562_9_0_5"/>
<dbReference type="OrthoDB" id="9801717at2"/>
<dbReference type="Proteomes" id="UP000001976">
    <property type="component" value="Chromosome"/>
</dbReference>
<dbReference type="GO" id="GO:0005737">
    <property type="term" value="C:cytoplasm"/>
    <property type="evidence" value="ECO:0007669"/>
    <property type="project" value="UniProtKB-SubCell"/>
</dbReference>
<dbReference type="GO" id="GO:0003677">
    <property type="term" value="F:DNA binding"/>
    <property type="evidence" value="ECO:0007669"/>
    <property type="project" value="UniProtKB-KW"/>
</dbReference>
<dbReference type="GO" id="GO:0009037">
    <property type="term" value="F:tyrosine-based site-specific recombinase activity"/>
    <property type="evidence" value="ECO:0007669"/>
    <property type="project" value="UniProtKB-UniRule"/>
</dbReference>
<dbReference type="GO" id="GO:0051301">
    <property type="term" value="P:cell division"/>
    <property type="evidence" value="ECO:0007669"/>
    <property type="project" value="UniProtKB-KW"/>
</dbReference>
<dbReference type="GO" id="GO:0007059">
    <property type="term" value="P:chromosome segregation"/>
    <property type="evidence" value="ECO:0007669"/>
    <property type="project" value="UniProtKB-UniRule"/>
</dbReference>
<dbReference type="GO" id="GO:0006313">
    <property type="term" value="P:DNA transposition"/>
    <property type="evidence" value="ECO:0007669"/>
    <property type="project" value="UniProtKB-UniRule"/>
</dbReference>
<dbReference type="Gene3D" id="1.10.150.130">
    <property type="match status" value="1"/>
</dbReference>
<dbReference type="Gene3D" id="1.10.443.10">
    <property type="entry name" value="Intergrase catalytic core"/>
    <property type="match status" value="1"/>
</dbReference>
<dbReference type="HAMAP" id="MF_01808">
    <property type="entry name" value="Recomb_XerC_XerD"/>
    <property type="match status" value="1"/>
</dbReference>
<dbReference type="InterPro" id="IPR044068">
    <property type="entry name" value="CB"/>
</dbReference>
<dbReference type="InterPro" id="IPR011010">
    <property type="entry name" value="DNA_brk_join_enz"/>
</dbReference>
<dbReference type="InterPro" id="IPR013762">
    <property type="entry name" value="Integrase-like_cat_sf"/>
</dbReference>
<dbReference type="InterPro" id="IPR002104">
    <property type="entry name" value="Integrase_catalytic"/>
</dbReference>
<dbReference type="InterPro" id="IPR010998">
    <property type="entry name" value="Integrase_recombinase_N"/>
</dbReference>
<dbReference type="InterPro" id="IPR004107">
    <property type="entry name" value="Integrase_SAM-like_N"/>
</dbReference>
<dbReference type="InterPro" id="IPR023009">
    <property type="entry name" value="Tyrosine_recombinase_XerC/XerD"/>
</dbReference>
<dbReference type="InterPro" id="IPR050090">
    <property type="entry name" value="Tyrosine_recombinase_XerCD"/>
</dbReference>
<dbReference type="PANTHER" id="PTHR30349">
    <property type="entry name" value="PHAGE INTEGRASE-RELATED"/>
    <property type="match status" value="1"/>
</dbReference>
<dbReference type="PANTHER" id="PTHR30349:SF90">
    <property type="entry name" value="TYROSINE RECOMBINASE XERD"/>
    <property type="match status" value="1"/>
</dbReference>
<dbReference type="Pfam" id="PF02899">
    <property type="entry name" value="Phage_int_SAM_1"/>
    <property type="match status" value="1"/>
</dbReference>
<dbReference type="Pfam" id="PF00589">
    <property type="entry name" value="Phage_integrase"/>
    <property type="match status" value="1"/>
</dbReference>
<dbReference type="SUPFAM" id="SSF56349">
    <property type="entry name" value="DNA breaking-rejoining enzymes"/>
    <property type="match status" value="1"/>
</dbReference>
<dbReference type="PROSITE" id="PS51900">
    <property type="entry name" value="CB"/>
    <property type="match status" value="1"/>
</dbReference>
<dbReference type="PROSITE" id="PS51898">
    <property type="entry name" value="TYR_RECOMBINASE"/>
    <property type="match status" value="1"/>
</dbReference>
<reference key="1">
    <citation type="journal article" date="2001" name="Proc. Natl. Acad. Sci. U.S.A.">
        <title>Analysis of the chromosome sequence of the legume symbiont Sinorhizobium meliloti strain 1021.</title>
        <authorList>
            <person name="Capela D."/>
            <person name="Barloy-Hubler F."/>
            <person name="Gouzy J."/>
            <person name="Bothe G."/>
            <person name="Ampe F."/>
            <person name="Batut J."/>
            <person name="Boistard P."/>
            <person name="Becker A."/>
            <person name="Boutry M."/>
            <person name="Cadieu E."/>
            <person name="Dreano S."/>
            <person name="Gloux S."/>
            <person name="Godrie T."/>
            <person name="Goffeau A."/>
            <person name="Kahn D."/>
            <person name="Kiss E."/>
            <person name="Lelaure V."/>
            <person name="Masuy D."/>
            <person name="Pohl T."/>
            <person name="Portetelle D."/>
            <person name="Puehler A."/>
            <person name="Purnelle B."/>
            <person name="Ramsperger U."/>
            <person name="Renard C."/>
            <person name="Thebault P."/>
            <person name="Vandenbol M."/>
            <person name="Weidner S."/>
            <person name="Galibert F."/>
        </authorList>
    </citation>
    <scope>NUCLEOTIDE SEQUENCE [LARGE SCALE GENOMIC DNA]</scope>
    <source>
        <strain>1021</strain>
    </source>
</reference>
<reference key="2">
    <citation type="journal article" date="2001" name="Science">
        <title>The composite genome of the legume symbiont Sinorhizobium meliloti.</title>
        <authorList>
            <person name="Galibert F."/>
            <person name="Finan T.M."/>
            <person name="Long S.R."/>
            <person name="Puehler A."/>
            <person name="Abola P."/>
            <person name="Ampe F."/>
            <person name="Barloy-Hubler F."/>
            <person name="Barnett M.J."/>
            <person name="Becker A."/>
            <person name="Boistard P."/>
            <person name="Bothe G."/>
            <person name="Boutry M."/>
            <person name="Bowser L."/>
            <person name="Buhrmester J."/>
            <person name="Cadieu E."/>
            <person name="Capela D."/>
            <person name="Chain P."/>
            <person name="Cowie A."/>
            <person name="Davis R.W."/>
            <person name="Dreano S."/>
            <person name="Federspiel N.A."/>
            <person name="Fisher R.F."/>
            <person name="Gloux S."/>
            <person name="Godrie T."/>
            <person name="Goffeau A."/>
            <person name="Golding B."/>
            <person name="Gouzy J."/>
            <person name="Gurjal M."/>
            <person name="Hernandez-Lucas I."/>
            <person name="Hong A."/>
            <person name="Huizar L."/>
            <person name="Hyman R.W."/>
            <person name="Jones T."/>
            <person name="Kahn D."/>
            <person name="Kahn M.L."/>
            <person name="Kalman S."/>
            <person name="Keating D.H."/>
            <person name="Kiss E."/>
            <person name="Komp C."/>
            <person name="Lelaure V."/>
            <person name="Masuy D."/>
            <person name="Palm C."/>
            <person name="Peck M.C."/>
            <person name="Pohl T.M."/>
            <person name="Portetelle D."/>
            <person name="Purnelle B."/>
            <person name="Ramsperger U."/>
            <person name="Surzycki R."/>
            <person name="Thebault P."/>
            <person name="Vandenbol M."/>
            <person name="Vorhoelter F.J."/>
            <person name="Weidner S."/>
            <person name="Wells D.H."/>
            <person name="Wong K."/>
            <person name="Yeh K.-C."/>
            <person name="Batut J."/>
        </authorList>
    </citation>
    <scope>NUCLEOTIDE SEQUENCE [LARGE SCALE GENOMIC DNA]</scope>
    <source>
        <strain>1021</strain>
    </source>
</reference>
<name>XERC_RHIME</name>
<organism>
    <name type="scientific">Rhizobium meliloti (strain 1021)</name>
    <name type="common">Ensifer meliloti</name>
    <name type="synonym">Sinorhizobium meliloti</name>
    <dbReference type="NCBI Taxonomy" id="266834"/>
    <lineage>
        <taxon>Bacteria</taxon>
        <taxon>Pseudomonadati</taxon>
        <taxon>Pseudomonadota</taxon>
        <taxon>Alphaproteobacteria</taxon>
        <taxon>Hyphomicrobiales</taxon>
        <taxon>Rhizobiaceae</taxon>
        <taxon>Sinorhizobium/Ensifer group</taxon>
        <taxon>Sinorhizobium</taxon>
    </lineage>
</organism>
<comment type="function">
    <text evidence="1">Site-specific tyrosine recombinase, which acts by catalyzing the cutting and rejoining of the recombining DNA molecules. The XerC-XerD complex is essential to convert dimers of the bacterial chromosome into monomers to permit their segregation at cell division. It also contributes to the segregational stability of plasmids.</text>
</comment>
<comment type="subunit">
    <text evidence="1">Forms a cyclic heterotetrameric complex composed of two molecules of XerC and two molecules of XerD.</text>
</comment>
<comment type="subcellular location">
    <subcellularLocation>
        <location evidence="1">Cytoplasm</location>
    </subcellularLocation>
</comment>
<comment type="similarity">
    <text evidence="1">Belongs to the 'phage' integrase family. XerC subfamily.</text>
</comment>
<comment type="sequence caution" evidence="4">
    <conflict type="erroneous initiation">
        <sequence resource="EMBL-CDS" id="CAC47625"/>
    </conflict>
</comment>
<gene>
    <name evidence="1" type="primary">xerC</name>
    <name type="ordered locus">R03046</name>
    <name type="ORF">SMc02489</name>
</gene>